<feature type="chain" id="PRO_1000127688" description="UDP-3-O-acylglucosamine N-acyltransferase">
    <location>
        <begin position="1"/>
        <end position="347"/>
    </location>
</feature>
<feature type="active site" description="Proton acceptor" evidence="1">
    <location>
        <position position="241"/>
    </location>
</feature>
<organism>
    <name type="scientific">Neisseria gonorrhoeae (strain NCCP11945)</name>
    <dbReference type="NCBI Taxonomy" id="521006"/>
    <lineage>
        <taxon>Bacteria</taxon>
        <taxon>Pseudomonadati</taxon>
        <taxon>Pseudomonadota</taxon>
        <taxon>Betaproteobacteria</taxon>
        <taxon>Neisseriales</taxon>
        <taxon>Neisseriaceae</taxon>
        <taxon>Neisseria</taxon>
    </lineage>
</organism>
<dbReference type="EC" id="2.3.1.191" evidence="1"/>
<dbReference type="EMBL" id="CP001050">
    <property type="protein sequence ID" value="ACF31071.1"/>
    <property type="molecule type" value="Genomic_DNA"/>
</dbReference>
<dbReference type="RefSeq" id="WP_003690319.1">
    <property type="nucleotide sequence ID" value="NC_011035.1"/>
</dbReference>
<dbReference type="SMR" id="B4RR13"/>
<dbReference type="KEGG" id="ngk:NGK_2471"/>
<dbReference type="HOGENOM" id="CLU_049865_0_1_4"/>
<dbReference type="UniPathway" id="UPA00973"/>
<dbReference type="Proteomes" id="UP000002564">
    <property type="component" value="Chromosome"/>
</dbReference>
<dbReference type="GO" id="GO:0016020">
    <property type="term" value="C:membrane"/>
    <property type="evidence" value="ECO:0007669"/>
    <property type="project" value="GOC"/>
</dbReference>
<dbReference type="GO" id="GO:0016410">
    <property type="term" value="F:N-acyltransferase activity"/>
    <property type="evidence" value="ECO:0007669"/>
    <property type="project" value="InterPro"/>
</dbReference>
<dbReference type="GO" id="GO:0009245">
    <property type="term" value="P:lipid A biosynthetic process"/>
    <property type="evidence" value="ECO:0007669"/>
    <property type="project" value="UniProtKB-UniRule"/>
</dbReference>
<dbReference type="CDD" id="cd03352">
    <property type="entry name" value="LbH_LpxD"/>
    <property type="match status" value="1"/>
</dbReference>
<dbReference type="Gene3D" id="1.20.5.170">
    <property type="match status" value="1"/>
</dbReference>
<dbReference type="Gene3D" id="2.160.10.10">
    <property type="entry name" value="Hexapeptide repeat proteins"/>
    <property type="match status" value="1"/>
</dbReference>
<dbReference type="Gene3D" id="3.40.1390.10">
    <property type="entry name" value="MurE/MurF, N-terminal domain"/>
    <property type="match status" value="1"/>
</dbReference>
<dbReference type="HAMAP" id="MF_00523">
    <property type="entry name" value="LpxD"/>
    <property type="match status" value="1"/>
</dbReference>
<dbReference type="InterPro" id="IPR001451">
    <property type="entry name" value="Hexapep"/>
</dbReference>
<dbReference type="InterPro" id="IPR018357">
    <property type="entry name" value="Hexapep_transf_CS"/>
</dbReference>
<dbReference type="InterPro" id="IPR007691">
    <property type="entry name" value="LpxD"/>
</dbReference>
<dbReference type="InterPro" id="IPR011004">
    <property type="entry name" value="Trimer_LpxA-like_sf"/>
</dbReference>
<dbReference type="InterPro" id="IPR020573">
    <property type="entry name" value="UDP_GlcNAc_AcTrfase_non-rep"/>
</dbReference>
<dbReference type="NCBIfam" id="TIGR01853">
    <property type="entry name" value="lipid_A_lpxD"/>
    <property type="match status" value="1"/>
</dbReference>
<dbReference type="NCBIfam" id="NF002060">
    <property type="entry name" value="PRK00892.1"/>
    <property type="match status" value="1"/>
</dbReference>
<dbReference type="PANTHER" id="PTHR43378">
    <property type="entry name" value="UDP-3-O-ACYLGLUCOSAMINE N-ACYLTRANSFERASE"/>
    <property type="match status" value="1"/>
</dbReference>
<dbReference type="PANTHER" id="PTHR43378:SF2">
    <property type="entry name" value="UDP-3-O-ACYLGLUCOSAMINE N-ACYLTRANSFERASE 1, MITOCHONDRIAL-RELATED"/>
    <property type="match status" value="1"/>
</dbReference>
<dbReference type="Pfam" id="PF00132">
    <property type="entry name" value="Hexapep"/>
    <property type="match status" value="2"/>
</dbReference>
<dbReference type="Pfam" id="PF04613">
    <property type="entry name" value="LpxD"/>
    <property type="match status" value="1"/>
</dbReference>
<dbReference type="SUPFAM" id="SSF51161">
    <property type="entry name" value="Trimeric LpxA-like enzymes"/>
    <property type="match status" value="1"/>
</dbReference>
<dbReference type="PROSITE" id="PS00101">
    <property type="entry name" value="HEXAPEP_TRANSFERASES"/>
    <property type="match status" value="1"/>
</dbReference>
<proteinExistence type="inferred from homology"/>
<name>LPXD_NEIG2</name>
<protein>
    <recommendedName>
        <fullName evidence="1">UDP-3-O-acylglucosamine N-acyltransferase</fullName>
        <ecNumber evidence="1">2.3.1.191</ecNumber>
    </recommendedName>
</protein>
<evidence type="ECO:0000255" key="1">
    <source>
        <dbReference type="HAMAP-Rule" id="MF_00523"/>
    </source>
</evidence>
<sequence length="347" mass="36253">MIPATCTLSQITARLGGEWRGEDISVTAVRPLADAQAEHISFLANPKYKAEVHDSSAGAIIVSAKAADGFEGRNLIVADDPYLYFAKVARLFSPVVKARGGIHPTAVVEPGATVPASCEIGANAYIGANTVLGEGCRILANAVVQHDCKLGDEVVLHPNAVVYYGCTLGRHVEIHSGAVIGADGFGLAFAGDSWFKIPQTGAVTLGDDVEIGSNTNIDRGAMSDTIVGNGTKIDNQVQIGHNCKIGSHTVIAAKTGISGSVTIGSYCIIGGGVGTVGHIEIADKTTIGGGTSVTHSITESGKHIAGIFPMSTHKEWARNAVYIHRLSEMNKRLKTLEQQLSDSKDTQ</sequence>
<keyword id="KW-0012">Acyltransferase</keyword>
<keyword id="KW-0441">Lipid A biosynthesis</keyword>
<keyword id="KW-0444">Lipid biosynthesis</keyword>
<keyword id="KW-0443">Lipid metabolism</keyword>
<keyword id="KW-0677">Repeat</keyword>
<keyword id="KW-0808">Transferase</keyword>
<gene>
    <name evidence="1" type="primary">lpxD</name>
    <name type="ordered locus">NGK_2471</name>
</gene>
<comment type="function">
    <text evidence="1">Catalyzes the N-acylation of UDP-3-O-acylglucosamine using 3-hydroxyacyl-ACP as the acyl donor. Is involved in the biosynthesis of lipid A, a phosphorylated glycolipid that anchors the lipopolysaccharide to the outer membrane of the cell.</text>
</comment>
<comment type="catalytic activity">
    <reaction evidence="1">
        <text>a UDP-3-O-[(3R)-3-hydroxyacyl]-alpha-D-glucosamine + a (3R)-hydroxyacyl-[ACP] = a UDP-2-N,3-O-bis[(3R)-3-hydroxyacyl]-alpha-D-glucosamine + holo-[ACP] + H(+)</text>
        <dbReference type="Rhea" id="RHEA:53836"/>
        <dbReference type="Rhea" id="RHEA-COMP:9685"/>
        <dbReference type="Rhea" id="RHEA-COMP:9945"/>
        <dbReference type="ChEBI" id="CHEBI:15378"/>
        <dbReference type="ChEBI" id="CHEBI:64479"/>
        <dbReference type="ChEBI" id="CHEBI:78827"/>
        <dbReference type="ChEBI" id="CHEBI:137740"/>
        <dbReference type="ChEBI" id="CHEBI:137748"/>
        <dbReference type="EC" id="2.3.1.191"/>
    </reaction>
</comment>
<comment type="pathway">
    <text evidence="1">Bacterial outer membrane biogenesis; LPS lipid A biosynthesis.</text>
</comment>
<comment type="subunit">
    <text evidence="1">Homotrimer.</text>
</comment>
<comment type="similarity">
    <text evidence="1">Belongs to the transferase hexapeptide repeat family. LpxD subfamily.</text>
</comment>
<reference key="1">
    <citation type="journal article" date="2008" name="J. Bacteriol.">
        <title>Complete genome sequence of Neisseria gonorrhoeae NCCP11945.</title>
        <authorList>
            <person name="Chung G.T."/>
            <person name="Yoo J.S."/>
            <person name="Oh H.B."/>
            <person name="Lee Y.S."/>
            <person name="Cha S.H."/>
            <person name="Kim S.J."/>
            <person name="Yoo C.K."/>
        </authorList>
    </citation>
    <scope>NUCLEOTIDE SEQUENCE [LARGE SCALE GENOMIC DNA]</scope>
    <source>
        <strain>NCCP11945</strain>
    </source>
</reference>
<accession>B4RR13</accession>